<organism>
    <name type="scientific">Gloeobacter violaceus (strain ATCC 29082 / PCC 7421)</name>
    <dbReference type="NCBI Taxonomy" id="251221"/>
    <lineage>
        <taxon>Bacteria</taxon>
        <taxon>Bacillati</taxon>
        <taxon>Cyanobacteriota</taxon>
        <taxon>Cyanophyceae</taxon>
        <taxon>Gloeobacterales</taxon>
        <taxon>Gloeobacteraceae</taxon>
        <taxon>Gloeobacter</taxon>
    </lineage>
</organism>
<name>Y3835_GLOVI</name>
<dbReference type="EMBL" id="BA000045">
    <property type="protein sequence ID" value="BAC91776.1"/>
    <property type="molecule type" value="Genomic_DNA"/>
</dbReference>
<dbReference type="RefSeq" id="NP_926781.1">
    <property type="nucleotide sequence ID" value="NC_005125.1"/>
</dbReference>
<dbReference type="SMR" id="Q7NEP3"/>
<dbReference type="STRING" id="251221.gene:10761352"/>
<dbReference type="EnsemblBacteria" id="BAC91776">
    <property type="protein sequence ID" value="BAC91776"/>
    <property type="gene ID" value="BAC91776"/>
</dbReference>
<dbReference type="KEGG" id="gvi:glr3835"/>
<dbReference type="eggNOG" id="COG1872">
    <property type="taxonomic scope" value="Bacteria"/>
</dbReference>
<dbReference type="HOGENOM" id="CLU_130694_5_0_3"/>
<dbReference type="InParanoid" id="Q7NEP3"/>
<dbReference type="OrthoDB" id="9800587at2"/>
<dbReference type="PhylomeDB" id="Q7NEP3"/>
<dbReference type="Proteomes" id="UP000000557">
    <property type="component" value="Chromosome"/>
</dbReference>
<dbReference type="GO" id="GO:0005737">
    <property type="term" value="C:cytoplasm"/>
    <property type="evidence" value="ECO:0000318"/>
    <property type="project" value="GO_Central"/>
</dbReference>
<dbReference type="Gene3D" id="3.30.1200.10">
    <property type="entry name" value="YggU-like"/>
    <property type="match status" value="1"/>
</dbReference>
<dbReference type="HAMAP" id="MF_00634">
    <property type="entry name" value="UPF0235"/>
    <property type="match status" value="1"/>
</dbReference>
<dbReference type="InterPro" id="IPR003746">
    <property type="entry name" value="DUF167"/>
</dbReference>
<dbReference type="InterPro" id="IPR036591">
    <property type="entry name" value="YggU-like_sf"/>
</dbReference>
<dbReference type="NCBIfam" id="TIGR00251">
    <property type="entry name" value="DUF167 family protein"/>
    <property type="match status" value="1"/>
</dbReference>
<dbReference type="PANTHER" id="PTHR13420">
    <property type="entry name" value="UPF0235 PROTEIN C15ORF40"/>
    <property type="match status" value="1"/>
</dbReference>
<dbReference type="PANTHER" id="PTHR13420:SF7">
    <property type="entry name" value="UPF0235 PROTEIN C15ORF40"/>
    <property type="match status" value="1"/>
</dbReference>
<dbReference type="Pfam" id="PF02594">
    <property type="entry name" value="DUF167"/>
    <property type="match status" value="1"/>
</dbReference>
<dbReference type="SMART" id="SM01152">
    <property type="entry name" value="DUF167"/>
    <property type="match status" value="1"/>
</dbReference>
<dbReference type="SUPFAM" id="SSF69786">
    <property type="entry name" value="YggU-like"/>
    <property type="match status" value="1"/>
</dbReference>
<feature type="chain" id="PRO_0000139444" description="UPF0235 protein glr3835">
    <location>
        <begin position="1"/>
        <end position="111"/>
    </location>
</feature>
<protein>
    <recommendedName>
        <fullName evidence="1">UPF0235 protein glr3835</fullName>
    </recommendedName>
</protein>
<reference key="1">
    <citation type="journal article" date="2003" name="DNA Res.">
        <title>Complete genome structure of Gloeobacter violaceus PCC 7421, a cyanobacterium that lacks thylakoids.</title>
        <authorList>
            <person name="Nakamura Y."/>
            <person name="Kaneko T."/>
            <person name="Sato S."/>
            <person name="Mimuro M."/>
            <person name="Miyashita H."/>
            <person name="Tsuchiya T."/>
            <person name="Sasamoto S."/>
            <person name="Watanabe A."/>
            <person name="Kawashima K."/>
            <person name="Kishida Y."/>
            <person name="Kiyokawa C."/>
            <person name="Kohara M."/>
            <person name="Matsumoto M."/>
            <person name="Matsuno A."/>
            <person name="Nakazaki N."/>
            <person name="Shimpo S."/>
            <person name="Takeuchi C."/>
            <person name="Yamada M."/>
            <person name="Tabata S."/>
        </authorList>
    </citation>
    <scope>NUCLEOTIDE SEQUENCE [LARGE SCALE GENOMIC DNA]</scope>
    <source>
        <strain>ATCC 29082 / PCC 7421</strain>
    </source>
</reference>
<keyword id="KW-1185">Reference proteome</keyword>
<proteinExistence type="inferred from homology"/>
<comment type="similarity">
    <text evidence="1">Belongs to the UPF0235 family.</text>
</comment>
<gene>
    <name type="ordered locus">glr3835</name>
</gene>
<evidence type="ECO:0000255" key="1">
    <source>
        <dbReference type="HAMAP-Rule" id="MF_00634"/>
    </source>
</evidence>
<accession>Q7NEP3</accession>
<sequence length="111" mass="11821">MRSPLPPMPDPEAFPPGAVSVDAGGITLTVWAQPRASCSEVVGWQQNAFKVRLAAPPVEGKANAECVALIAAFFGVPRRQVSLVQGQQGRHKKIRIEAPADLLLVALQKLS</sequence>